<protein>
    <recommendedName>
        <fullName>Alpha-(1,3)-fucosyltransferase 4</fullName>
    </recommendedName>
    <alternativeName>
        <fullName>4-galactosyl-N-acetylglucosaminide 3-alpha-L-fucosyltransferase</fullName>
        <ecNumber evidence="2 3">2.4.1.152</ecNumber>
    </alternativeName>
    <alternativeName>
        <fullName>Fucosyltransferase 4</fullName>
    </alternativeName>
    <alternativeName>
        <fullName>Fucosyltransferase IV</fullName>
        <shortName>Fuc-TIV</shortName>
        <shortName>FucT-IV</shortName>
    </alternativeName>
    <alternativeName>
        <fullName>Galactoside 3-L-fucosyltransferase</fullName>
    </alternativeName>
</protein>
<dbReference type="EC" id="2.4.1.152" evidence="2 3"/>
<dbReference type="EMBL" id="AF531092">
    <property type="protein sequence ID" value="AAN63882.1"/>
    <property type="molecule type" value="mRNA"/>
</dbReference>
<dbReference type="RefSeq" id="NP_777161.1">
    <property type="nucleotide sequence ID" value="NM_174736.2"/>
</dbReference>
<dbReference type="SMR" id="Q8HZR3"/>
<dbReference type="FunCoup" id="Q8HZR3">
    <property type="interactions" value="578"/>
</dbReference>
<dbReference type="STRING" id="9913.ENSBTAP00000048467"/>
<dbReference type="CAZy" id="GT10">
    <property type="family name" value="Glycosyltransferase Family 10"/>
</dbReference>
<dbReference type="GlyCosmos" id="Q8HZR3">
    <property type="glycosylation" value="3 sites, No reported glycans"/>
</dbReference>
<dbReference type="GlyGen" id="Q8HZR3">
    <property type="glycosylation" value="3 sites"/>
</dbReference>
<dbReference type="PaxDb" id="9913-ENSBTAP00000048467"/>
<dbReference type="GeneID" id="282854"/>
<dbReference type="KEGG" id="bta:282854"/>
<dbReference type="CTD" id="2526"/>
<dbReference type="eggNOG" id="KOG2619">
    <property type="taxonomic scope" value="Eukaryota"/>
</dbReference>
<dbReference type="InParanoid" id="Q8HZR3"/>
<dbReference type="OrthoDB" id="427096at2759"/>
<dbReference type="UniPathway" id="UPA00378"/>
<dbReference type="Proteomes" id="UP000009136">
    <property type="component" value="Unplaced"/>
</dbReference>
<dbReference type="GO" id="GO:0032580">
    <property type="term" value="C:Golgi cisterna membrane"/>
    <property type="evidence" value="ECO:0007669"/>
    <property type="project" value="UniProtKB-SubCell"/>
</dbReference>
<dbReference type="GO" id="GO:0005802">
    <property type="term" value="C:trans-Golgi network"/>
    <property type="evidence" value="ECO:0000250"/>
    <property type="project" value="UniProtKB"/>
</dbReference>
<dbReference type="GO" id="GO:0017083">
    <property type="term" value="F:4-galactosyl-N-acetylglucosaminide 3-alpha-L-fucosyltransferase activity"/>
    <property type="evidence" value="ECO:0000250"/>
    <property type="project" value="UniProtKB"/>
</dbReference>
<dbReference type="GO" id="GO:0046920">
    <property type="term" value="F:alpha-(1-&gt;3)-fucosyltransferase activity"/>
    <property type="evidence" value="ECO:0000250"/>
    <property type="project" value="UniProtKB"/>
</dbReference>
<dbReference type="GO" id="GO:0036065">
    <property type="term" value="P:fucosylation"/>
    <property type="evidence" value="ECO:0000318"/>
    <property type="project" value="GO_Central"/>
</dbReference>
<dbReference type="GO" id="GO:0006688">
    <property type="term" value="P:glycosphingolipid biosynthetic process"/>
    <property type="evidence" value="ECO:0000250"/>
    <property type="project" value="UniProtKB"/>
</dbReference>
<dbReference type="GO" id="GO:0006954">
    <property type="term" value="P:inflammatory response"/>
    <property type="evidence" value="ECO:0007669"/>
    <property type="project" value="UniProtKB-KW"/>
</dbReference>
<dbReference type="GO" id="GO:0106402">
    <property type="term" value="P:Lewis x epitope biosynthetic process"/>
    <property type="evidence" value="ECO:0000250"/>
    <property type="project" value="UniProtKB"/>
</dbReference>
<dbReference type="GO" id="GO:0097022">
    <property type="term" value="P:lymphocyte migration into lymph node"/>
    <property type="evidence" value="ECO:0000250"/>
    <property type="project" value="UniProtKB"/>
</dbReference>
<dbReference type="GO" id="GO:0009311">
    <property type="term" value="P:oligosaccharide metabolic process"/>
    <property type="evidence" value="ECO:0000250"/>
    <property type="project" value="UniProtKB"/>
</dbReference>
<dbReference type="GO" id="GO:1903238">
    <property type="term" value="P:positive regulation of leukocyte tethering or rolling"/>
    <property type="evidence" value="ECO:0000250"/>
    <property type="project" value="UniProtKB"/>
</dbReference>
<dbReference type="GO" id="GO:1902624">
    <property type="term" value="P:positive regulation of neutrophil migration"/>
    <property type="evidence" value="ECO:0000250"/>
    <property type="project" value="UniProtKB"/>
</dbReference>
<dbReference type="GO" id="GO:0006487">
    <property type="term" value="P:protein N-linked glycosylation"/>
    <property type="evidence" value="ECO:0000250"/>
    <property type="project" value="UniProtKB"/>
</dbReference>
<dbReference type="GO" id="GO:0006493">
    <property type="term" value="P:protein O-linked glycosylation"/>
    <property type="evidence" value="ECO:0000250"/>
    <property type="project" value="UniProtKB"/>
</dbReference>
<dbReference type="GO" id="GO:1903037">
    <property type="term" value="P:regulation of leukocyte cell-cell adhesion"/>
    <property type="evidence" value="ECO:0000250"/>
    <property type="project" value="UniProtKB"/>
</dbReference>
<dbReference type="FunFam" id="3.40.50.11660:FF:000001">
    <property type="entry name" value="alpha-(1,3)-fucosyltransferase 9"/>
    <property type="match status" value="1"/>
</dbReference>
<dbReference type="Gene3D" id="3.40.50.11660">
    <property type="entry name" value="Glycosyl transferase family 10, C-terminal domain"/>
    <property type="match status" value="1"/>
</dbReference>
<dbReference type="InterPro" id="IPR055270">
    <property type="entry name" value="Glyco_tran_10_C"/>
</dbReference>
<dbReference type="InterPro" id="IPR031481">
    <property type="entry name" value="Glyco_tran_10_N"/>
</dbReference>
<dbReference type="InterPro" id="IPR001503">
    <property type="entry name" value="Glyco_trans_10"/>
</dbReference>
<dbReference type="InterPro" id="IPR038577">
    <property type="entry name" value="GT10-like_C_sf"/>
</dbReference>
<dbReference type="PANTHER" id="PTHR11929">
    <property type="entry name" value="ALPHA- 1,3 -FUCOSYLTRANSFERASE"/>
    <property type="match status" value="1"/>
</dbReference>
<dbReference type="PANTHER" id="PTHR11929:SF132">
    <property type="entry name" value="ALPHA-(1,3)-FUCOSYLTRANSFERASE 4"/>
    <property type="match status" value="1"/>
</dbReference>
<dbReference type="Pfam" id="PF17039">
    <property type="entry name" value="Glyco_tran_10_N"/>
    <property type="match status" value="1"/>
</dbReference>
<dbReference type="Pfam" id="PF00852">
    <property type="entry name" value="Glyco_transf_10"/>
    <property type="match status" value="1"/>
</dbReference>
<dbReference type="SUPFAM" id="SSF53756">
    <property type="entry name" value="UDP-Glycosyltransferase/glycogen phosphorylase"/>
    <property type="match status" value="1"/>
</dbReference>
<reference key="1">
    <citation type="submission" date="2002-07" db="EMBL/GenBank/DDBJ databases">
        <authorList>
            <person name="Javaud C."/>
            <person name="Julien R."/>
        </authorList>
    </citation>
    <scope>NUCLEOTIDE SEQUENCE [MRNA]</scope>
</reference>
<feature type="chain" id="PRO_0000221099" description="Alpha-(1,3)-fucosyltransferase 4">
    <location>
        <begin position="1"/>
        <end position="398"/>
    </location>
</feature>
<feature type="topological domain" description="Cytoplasmic" evidence="4">
    <location>
        <begin position="1"/>
        <end position="15"/>
    </location>
</feature>
<feature type="transmembrane region" description="Helical; Signal-anchor for type II membrane protein" evidence="4">
    <location>
        <begin position="16"/>
        <end position="40"/>
    </location>
</feature>
<feature type="topological domain" description="Lumenal" evidence="4">
    <location>
        <begin position="41"/>
        <end position="398"/>
    </location>
</feature>
<feature type="glycosylation site" description="N-linked (GlcNAc...) asparagine" evidence="4">
    <location>
        <position position="84"/>
    </location>
</feature>
<feature type="glycosylation site" description="N-linked (GlcNAc...) asparagine" evidence="4">
    <location>
        <position position="183"/>
    </location>
</feature>
<feature type="glycosylation site" description="N-linked (GlcNAc...) asparagine" evidence="4">
    <location>
        <position position="311"/>
    </location>
</feature>
<organism>
    <name type="scientific">Bos taurus</name>
    <name type="common">Bovine</name>
    <dbReference type="NCBI Taxonomy" id="9913"/>
    <lineage>
        <taxon>Eukaryota</taxon>
        <taxon>Metazoa</taxon>
        <taxon>Chordata</taxon>
        <taxon>Craniata</taxon>
        <taxon>Vertebrata</taxon>
        <taxon>Euteleostomi</taxon>
        <taxon>Mammalia</taxon>
        <taxon>Eutheria</taxon>
        <taxon>Laurasiatheria</taxon>
        <taxon>Artiodactyla</taxon>
        <taxon>Ruminantia</taxon>
        <taxon>Pecora</taxon>
        <taxon>Bovidae</taxon>
        <taxon>Bovinae</taxon>
        <taxon>Bos</taxon>
    </lineage>
</organism>
<gene>
    <name type="primary">FUT4</name>
</gene>
<sequence>MRARWGRRGARRGGPGLPGTHLALLAASLLSSSVAIYVCWKQLPPLPWASPSPPRPVNVLLWWEPFRGRHNPRRPPPDCQRRFNISGCVLHTDRAAYEEAQAVLFHHRDLVKGPPDWPPPWGVQMPPVEEREGLVMDDEGQEAEAETSAALGPRPAGQRWVWMNFESPSHSPGLQGLAGNIFNWTLSYRADSDIFVPYGYLYPRTHPSEQPPGLVPPLARKQGLVAWVVSNWDERQARVRYYRQLSQYVTVDVFGKGGPGQPLPDAELVHTVARYKFYLAFENSQHLDYITEKLWRNAFLAGAVPVVLGPNRTNYERFVPSNAFIHVDDFPSASSLAAHLQFLDRNPTVYRGYFRWRRSHAVHVTSFWDEPWCLACQAVQKAGNQRKSVPNLAGWFQQ</sequence>
<comment type="function">
    <text evidence="2 3">Catalyzes alpha(1-&gt;3) linkage of fucosyl moiety transferred from GDP-beta-L-fucose to N-acetyl glucosamine (GlcNAc) within type 2 lactosamine (LacNAc, Gal-beta(1-&gt;4)GlcNAc) glycan attached to N- or O-linked glycoproteins. Robustly fucosylates nonsialylated distal LacNAc unit of the polylactosamine chain to form Lewis X antigen (CD15), a glycan determinant known to mediate important cellular functions in development and immunity. Fucosylates with lower efficiency sialylated LacNAc acceptors to form sialyl Lewis X and 6-sulfo sialyl Lewis X determinants that serve as recognition epitopes for C-type lectins. Together with FUT7 contributes to SELE, SELL and SELP selectin ligand biosynthesis and selectin-dependent lymphocyte homing, leukocyte migration and blood leukocyte homeostasis (By similarity). In a cell type specific manner, may also fucosylate the internal LacNAc unit of the polylactosamine chain to form VIM-2 antigen that serves as recognition epitope for SELE (By similarity).</text>
</comment>
<comment type="catalytic activity">
    <reaction evidence="3">
        <text>a beta-D-galactosyl-(1-&gt;4)-N-acetyl-beta-D-glucosaminyl derivative + GDP-beta-L-fucose = a beta-D-galactosyl-(1-&gt;4)-[alpha-L-fucosyl-(1-&gt;3)]-N-acetyl-beta-D-glucosaminyl derivative + GDP + H(+)</text>
        <dbReference type="Rhea" id="RHEA:14257"/>
        <dbReference type="ChEBI" id="CHEBI:15378"/>
        <dbReference type="ChEBI" id="CHEBI:57273"/>
        <dbReference type="ChEBI" id="CHEBI:58189"/>
        <dbReference type="ChEBI" id="CHEBI:133507"/>
        <dbReference type="ChEBI" id="CHEBI:137941"/>
        <dbReference type="EC" id="2.4.1.152"/>
    </reaction>
    <physiologicalReaction direction="left-to-right" evidence="3">
        <dbReference type="Rhea" id="RHEA:14258"/>
    </physiologicalReaction>
</comment>
<comment type="catalytic activity">
    <reaction evidence="3">
        <text>an N-acetyl-alpha-neuraminyl-(2-&gt;3)-beta-D-galactosyl-(1-&gt;4)-N-acetyl-beta-D-glucosaminyl derivative + GDP-beta-L-fucose = an alpha-Neu5Ac-(2-&gt;3)-beta-D-Gal-(1-&gt;4)-[alpha-L-Fuc-(1-&gt;3)]-beta-D-GlcNAc derivative + GDP + H(+)</text>
        <dbReference type="Rhea" id="RHEA:56076"/>
        <dbReference type="ChEBI" id="CHEBI:15378"/>
        <dbReference type="ChEBI" id="CHEBI:57273"/>
        <dbReference type="ChEBI" id="CHEBI:58189"/>
        <dbReference type="ChEBI" id="CHEBI:136545"/>
        <dbReference type="ChEBI" id="CHEBI:139509"/>
    </reaction>
    <physiologicalReaction direction="left-to-right" evidence="3">
        <dbReference type="Rhea" id="RHEA:56077"/>
    </physiologicalReaction>
</comment>
<comment type="catalytic activity">
    <reaction evidence="2">
        <text>an alpha-Neu5Ac-(2-&gt;3)-beta-D-Gal-(1-&gt;4)-beta-D-GlcNAc-(1-&gt;3)-beta-D-Gal-(1-&gt;4)-beta-D-GlcNAc derivative + GDP-beta-L-fucose = an alpha-Neu5Ac-(2-&gt;3)-beta-D-Gal-(1-&gt;4)-beta-D-GlcNAc-(1-&gt;3)-beta-D-Gal-(1-&gt;4)-[alpha-L-Fuc-(1-&gt;3)]-beta-D-GlcNAc derivative + GDP + H(+)</text>
        <dbReference type="Rhea" id="RHEA:68044"/>
        <dbReference type="ChEBI" id="CHEBI:15378"/>
        <dbReference type="ChEBI" id="CHEBI:57273"/>
        <dbReference type="ChEBI" id="CHEBI:58189"/>
        <dbReference type="ChEBI" id="CHEBI:145343"/>
        <dbReference type="ChEBI" id="CHEBI:176900"/>
    </reaction>
    <physiologicalReaction direction="left-to-right" evidence="2">
        <dbReference type="Rhea" id="RHEA:68045"/>
    </physiologicalReaction>
</comment>
<comment type="catalytic activity">
    <reaction evidence="3">
        <text>an alpha-Neu5Ac-(2-&gt;3)-beta-D-Gal-(1-&gt;4)-beta-D-GlcNAc6S derivative + GDP-beta-L-fucose = an alpha-Neu5Ac-(2-&gt;3)-beta-D-Gal-(1-&gt;4)-[alpha-L-Fuc-(1-&gt;3)]-beta-D-GlcNAc6S derivative + GDP + H(+)</text>
        <dbReference type="Rhea" id="RHEA:62004"/>
        <dbReference type="ChEBI" id="CHEBI:15378"/>
        <dbReference type="ChEBI" id="CHEBI:57273"/>
        <dbReference type="ChEBI" id="CHEBI:58189"/>
        <dbReference type="ChEBI" id="CHEBI:145344"/>
        <dbReference type="ChEBI" id="CHEBI:145345"/>
    </reaction>
    <physiologicalReaction direction="left-to-right" evidence="3">
        <dbReference type="Rhea" id="RHEA:62005"/>
    </physiologicalReaction>
</comment>
<comment type="pathway">
    <text evidence="3">Protein modification; protein glycosylation.</text>
</comment>
<comment type="subcellular location">
    <subcellularLocation>
        <location evidence="1">Golgi apparatus</location>
        <location evidence="1">Golgi stack membrane</location>
        <topology evidence="1">Single-pass type II membrane protein</topology>
    </subcellularLocation>
    <text evidence="1">Membrane-bound form in trans cisternae of Golgi.</text>
</comment>
<comment type="similarity">
    <text evidence="5">Belongs to the glycosyltransferase 10 family.</text>
</comment>
<proteinExistence type="evidence at transcript level"/>
<evidence type="ECO:0000250" key="1"/>
<evidence type="ECO:0000250" key="2">
    <source>
        <dbReference type="UniProtKB" id="P22083"/>
    </source>
</evidence>
<evidence type="ECO:0000250" key="3">
    <source>
        <dbReference type="UniProtKB" id="Q11127"/>
    </source>
</evidence>
<evidence type="ECO:0000255" key="4"/>
<evidence type="ECO:0000305" key="5"/>
<name>FUT4_BOVIN</name>
<keyword id="KW-0325">Glycoprotein</keyword>
<keyword id="KW-0328">Glycosyltransferase</keyword>
<keyword id="KW-0333">Golgi apparatus</keyword>
<keyword id="KW-0395">Inflammatory response</keyword>
<keyword id="KW-0472">Membrane</keyword>
<keyword id="KW-1185">Reference proteome</keyword>
<keyword id="KW-0735">Signal-anchor</keyword>
<keyword id="KW-0808">Transferase</keyword>
<keyword id="KW-0812">Transmembrane</keyword>
<keyword id="KW-1133">Transmembrane helix</keyword>
<accession>Q8HZR3</accession>